<sequence length="804" mass="90738">MSKLSFRARALDAAKPLPIYRGKDMPDLNDCVSINRAVPQMPTGMEKEEESEHHLQRAISAQQVFREKKESMVIPVPEAESNVHYYSRLYKGEFKQPKQFIHIQPFNLDYEQPDYDMDSEDETLLNRLNRKMEIKPLQFEIMIDRLEKASSNQLVTLQEAKLLLNEDDYLIKSVYDYWVRKRKNCRGPSLIPQVKQEKRDGSTNNDPYVAFRRRTEKMQTRKNRKNDEVSYEKMLKLRREFSRAITILEMIKRREKTKRELLHLTLEVVEKRYNLGDFGGEILNEIKIPKVEKEIHVIPPSLHNGNHHKVPECKVKNTHHPSVKDEVLEIVRLKKKYPKKPKAETLVTPQPQATSEPLAVINKSDIKQYDFQSSDDDEFPQVPSPLSELEEENDPDGSYAFRRRTGCQYYAPRLDQMNDTPETTDLSGLARHRYRHCLTTLTVPRRCIGFARKRLGRGGRVIMDRLSTEHDSILKQIDPEMLSGFSSSSHVAQPPSSPSRTNASDRHCENRLSLPEILSNIKSCRLQCFQPRLLHTQDSDREECTSRLGQAVNVKRVSAALLNTSKNGITVTGGITEEQFQTHQQQLVQMQRQQLAQLQQKQQSQQSLQQSHPKAQGSAKSDCMSKTLDSASALFAASAVVNSPTPGRSEVNKDQNAGHSNLNGVVQPSGTAKTLYSTNMALSSSPGISTVQLVRTVGHPTTNHLIPTLCTSNPQTLTMGNSCLANTVHLNNVSVVSPVNVHINTRTSAPSPTALKLATVAASMDRVPKVTPSSAISSIARENHEPERLGLNGIADTTVAMEVT</sequence>
<accession>Q6DJR9</accession>
<feature type="chain" id="PRO_0000239298" description="Enhancer of polycomb homolog 2">
    <location>
        <begin position="1"/>
        <end position="804"/>
    </location>
</feature>
<feature type="region of interest" description="Disordered" evidence="2">
    <location>
        <begin position="372"/>
        <end position="398"/>
    </location>
</feature>
<feature type="region of interest" description="Disordered" evidence="2">
    <location>
        <begin position="484"/>
        <end position="507"/>
    </location>
</feature>
<feature type="region of interest" description="Disordered" evidence="2">
    <location>
        <begin position="602"/>
        <end position="623"/>
    </location>
</feature>
<feature type="region of interest" description="Disordered" evidence="2">
    <location>
        <begin position="642"/>
        <end position="669"/>
    </location>
</feature>
<feature type="compositionally biased region" description="Low complexity" evidence="2">
    <location>
        <begin position="602"/>
        <end position="611"/>
    </location>
</feature>
<feature type="compositionally biased region" description="Polar residues" evidence="2">
    <location>
        <begin position="654"/>
        <end position="669"/>
    </location>
</feature>
<gene>
    <name type="primary">epc2</name>
</gene>
<proteinExistence type="evidence at transcript level"/>
<name>EPC2_XENTR</name>
<keyword id="KW-0156">Chromatin regulator</keyword>
<keyword id="KW-0227">DNA damage</keyword>
<keyword id="KW-0234">DNA repair</keyword>
<keyword id="KW-0539">Nucleus</keyword>
<keyword id="KW-1185">Reference proteome</keyword>
<keyword id="KW-0804">Transcription</keyword>
<keyword id="KW-0805">Transcription regulation</keyword>
<dbReference type="EMBL" id="BC075105">
    <property type="protein sequence ID" value="AAH75105.1"/>
    <property type="molecule type" value="mRNA"/>
</dbReference>
<dbReference type="RefSeq" id="NP_001005683.1">
    <property type="nucleotide sequence ID" value="NM_001005683.1"/>
</dbReference>
<dbReference type="SMR" id="Q6DJR9"/>
<dbReference type="FunCoup" id="Q6DJR9">
    <property type="interactions" value="1763"/>
</dbReference>
<dbReference type="STRING" id="8364.ENSXETP00000041789"/>
<dbReference type="PaxDb" id="8364-ENSXETP00000025511"/>
<dbReference type="DNASU" id="448185"/>
<dbReference type="GeneID" id="448185"/>
<dbReference type="KEGG" id="xtr:448185"/>
<dbReference type="AGR" id="Xenbase:XB-GENE-491423"/>
<dbReference type="CTD" id="26122"/>
<dbReference type="Xenbase" id="XB-GENE-491423">
    <property type="gene designation" value="epc2"/>
</dbReference>
<dbReference type="eggNOG" id="KOG2261">
    <property type="taxonomic scope" value="Eukaryota"/>
</dbReference>
<dbReference type="InParanoid" id="Q6DJR9"/>
<dbReference type="OMA" id="DQANHTC"/>
<dbReference type="OrthoDB" id="435275at2759"/>
<dbReference type="Proteomes" id="UP000008143">
    <property type="component" value="Chromosome 9"/>
</dbReference>
<dbReference type="GO" id="GO:0035267">
    <property type="term" value="C:NuA4 histone acetyltransferase complex"/>
    <property type="evidence" value="ECO:0007669"/>
    <property type="project" value="InterPro"/>
</dbReference>
<dbReference type="GO" id="GO:0005634">
    <property type="term" value="C:nucleus"/>
    <property type="evidence" value="ECO:0007669"/>
    <property type="project" value="UniProtKB-SubCell"/>
</dbReference>
<dbReference type="GO" id="GO:0006325">
    <property type="term" value="P:chromatin organization"/>
    <property type="evidence" value="ECO:0007669"/>
    <property type="project" value="UniProtKB-KW"/>
</dbReference>
<dbReference type="GO" id="GO:0006281">
    <property type="term" value="P:DNA repair"/>
    <property type="evidence" value="ECO:0007669"/>
    <property type="project" value="UniProtKB-KW"/>
</dbReference>
<dbReference type="GO" id="GO:0006357">
    <property type="term" value="P:regulation of transcription by RNA polymerase II"/>
    <property type="evidence" value="ECO:0007669"/>
    <property type="project" value="InterPro"/>
</dbReference>
<dbReference type="InterPro" id="IPR024943">
    <property type="entry name" value="Enhancer_polycomb"/>
</dbReference>
<dbReference type="InterPro" id="IPR019542">
    <property type="entry name" value="Enhancer_polycomb-like_N"/>
</dbReference>
<dbReference type="InterPro" id="IPR009607">
    <property type="entry name" value="Enhancer_polycomb_C"/>
</dbReference>
<dbReference type="PANTHER" id="PTHR14898">
    <property type="entry name" value="ENHANCER OF POLYCOMB"/>
    <property type="match status" value="1"/>
</dbReference>
<dbReference type="Pfam" id="PF06752">
    <property type="entry name" value="E_Pc_C"/>
    <property type="match status" value="1"/>
</dbReference>
<dbReference type="Pfam" id="PF10513">
    <property type="entry name" value="EPL1"/>
    <property type="match status" value="1"/>
</dbReference>
<organism>
    <name type="scientific">Xenopus tropicalis</name>
    <name type="common">Western clawed frog</name>
    <name type="synonym">Silurana tropicalis</name>
    <dbReference type="NCBI Taxonomy" id="8364"/>
    <lineage>
        <taxon>Eukaryota</taxon>
        <taxon>Metazoa</taxon>
        <taxon>Chordata</taxon>
        <taxon>Craniata</taxon>
        <taxon>Vertebrata</taxon>
        <taxon>Euteleostomi</taxon>
        <taxon>Amphibia</taxon>
        <taxon>Batrachia</taxon>
        <taxon>Anura</taxon>
        <taxon>Pipoidea</taxon>
        <taxon>Pipidae</taxon>
        <taxon>Xenopodinae</taxon>
        <taxon>Xenopus</taxon>
        <taxon>Silurana</taxon>
    </lineage>
</organism>
<evidence type="ECO:0000250" key="1"/>
<evidence type="ECO:0000256" key="2">
    <source>
        <dbReference type="SAM" id="MobiDB-lite"/>
    </source>
</evidence>
<evidence type="ECO:0000305" key="3"/>
<reference key="1">
    <citation type="submission" date="2004-06" db="EMBL/GenBank/DDBJ databases">
        <authorList>
            <consortium name="NIH - Xenopus Gene Collection (XGC) project"/>
        </authorList>
    </citation>
    <scope>NUCLEOTIDE SEQUENCE [LARGE SCALE MRNA]</scope>
    <source>
        <tissue>Embryo</tissue>
    </source>
</reference>
<comment type="function">
    <text evidence="1">May play a role in transcription or DNA repair.</text>
</comment>
<comment type="subcellular location">
    <subcellularLocation>
        <location evidence="1">Nucleus</location>
    </subcellularLocation>
</comment>
<comment type="similarity">
    <text evidence="3">Belongs to the enhancer of polycomb family.</text>
</comment>
<protein>
    <recommendedName>
        <fullName>Enhancer of polycomb homolog 2</fullName>
    </recommendedName>
</protein>